<name>DGTL1_RICCK</name>
<sequence>MLASYASDPLKSRGRLYKEIPNTYRNEFERDRDRIIHTNAFRRLQYKTQVFINHEGDHYRNRLTHSLEVSAVARSVANTLNLSSDLAETIALAHDLGHTPFGHAGERALNACMRDYNGFSHNAQSLKILTLLEKRYAAYNGVNLTWEVLEGIVKHNGPITCEINEYIAEYNKQNDLELDTYASAEAQIAALADDISYISHDLEDSIGAKIIDFNSLAELKYIDQYVFALKSKFKNISSSCLIYEVVRKLMHELITDLLWQTKENLNKEKITDIDEIRNLNYQLVDFTANTNERIKETKKFLHERVYKSNKITAISLKCTKIVQGLFKVYMDDINLLPVNWKMLIDSNEIYSKARVIADYIAGMTDRFAIQAYNQLC</sequence>
<gene>
    <name type="ordered locus">A1E_00305</name>
</gene>
<accession>A8EXD1</accession>
<keyword id="KW-0378">Hydrolase</keyword>
<feature type="chain" id="PRO_1000066439" description="Deoxyguanosinetriphosphate triphosphohydrolase-like protein">
    <location>
        <begin position="1"/>
        <end position="376"/>
    </location>
</feature>
<feature type="domain" description="HD" evidence="2">
    <location>
        <begin position="62"/>
        <end position="198"/>
    </location>
</feature>
<comment type="similarity">
    <text evidence="1">Belongs to the dGTPase family. Type 2 subfamily.</text>
</comment>
<reference key="1">
    <citation type="submission" date="2007-09" db="EMBL/GenBank/DDBJ databases">
        <title>Complete genome sequence of Rickettsia canadensis.</title>
        <authorList>
            <person name="Madan A."/>
            <person name="Fahey J."/>
            <person name="Helton E."/>
            <person name="Ketteman M."/>
            <person name="Madan A."/>
            <person name="Rodrigues S."/>
            <person name="Sanchez A."/>
            <person name="Whiting M."/>
            <person name="Dasch G."/>
            <person name="Eremeeva M."/>
        </authorList>
    </citation>
    <scope>NUCLEOTIDE SEQUENCE [LARGE SCALE GENOMIC DNA]</scope>
    <source>
        <strain>McKiel</strain>
    </source>
</reference>
<evidence type="ECO:0000255" key="1">
    <source>
        <dbReference type="HAMAP-Rule" id="MF_01212"/>
    </source>
</evidence>
<evidence type="ECO:0000255" key="2">
    <source>
        <dbReference type="PROSITE-ProRule" id="PRU01175"/>
    </source>
</evidence>
<proteinExistence type="inferred from homology"/>
<protein>
    <recommendedName>
        <fullName evidence="1">Deoxyguanosinetriphosphate triphosphohydrolase-like protein</fullName>
    </recommendedName>
</protein>
<dbReference type="EMBL" id="CP000409">
    <property type="protein sequence ID" value="ABV73014.1"/>
    <property type="molecule type" value="Genomic_DNA"/>
</dbReference>
<dbReference type="RefSeq" id="WP_012148215.1">
    <property type="nucleotide sequence ID" value="NC_009879.1"/>
</dbReference>
<dbReference type="SMR" id="A8EXD1"/>
<dbReference type="STRING" id="293613.A1E_00305"/>
<dbReference type="KEGG" id="rcm:A1E_00305"/>
<dbReference type="eggNOG" id="COG0232">
    <property type="taxonomic scope" value="Bacteria"/>
</dbReference>
<dbReference type="HOGENOM" id="CLU_028163_1_0_5"/>
<dbReference type="Proteomes" id="UP000007056">
    <property type="component" value="Chromosome"/>
</dbReference>
<dbReference type="GO" id="GO:0008832">
    <property type="term" value="F:dGTPase activity"/>
    <property type="evidence" value="ECO:0007669"/>
    <property type="project" value="TreeGrafter"/>
</dbReference>
<dbReference type="GO" id="GO:0006203">
    <property type="term" value="P:dGTP catabolic process"/>
    <property type="evidence" value="ECO:0007669"/>
    <property type="project" value="TreeGrafter"/>
</dbReference>
<dbReference type="CDD" id="cd00077">
    <property type="entry name" value="HDc"/>
    <property type="match status" value="1"/>
</dbReference>
<dbReference type="Gene3D" id="1.10.3210.10">
    <property type="entry name" value="Hypothetical protein af1432"/>
    <property type="match status" value="1"/>
</dbReference>
<dbReference type="HAMAP" id="MF_01212">
    <property type="entry name" value="dGTPase_type2"/>
    <property type="match status" value="1"/>
</dbReference>
<dbReference type="InterPro" id="IPR006261">
    <property type="entry name" value="dGTPase"/>
</dbReference>
<dbReference type="InterPro" id="IPR050135">
    <property type="entry name" value="dGTPase-like"/>
</dbReference>
<dbReference type="InterPro" id="IPR023023">
    <property type="entry name" value="dNTPase_2"/>
</dbReference>
<dbReference type="InterPro" id="IPR003607">
    <property type="entry name" value="HD/PDEase_dom"/>
</dbReference>
<dbReference type="InterPro" id="IPR006674">
    <property type="entry name" value="HD_domain"/>
</dbReference>
<dbReference type="InterPro" id="IPR026875">
    <property type="entry name" value="PHydrolase_assoc_dom"/>
</dbReference>
<dbReference type="NCBIfam" id="TIGR01353">
    <property type="entry name" value="dGTP_triPase"/>
    <property type="match status" value="1"/>
</dbReference>
<dbReference type="NCBIfam" id="NF002326">
    <property type="entry name" value="PRK01286.1-1"/>
    <property type="match status" value="1"/>
</dbReference>
<dbReference type="NCBIfam" id="NF002330">
    <property type="entry name" value="PRK01286.1-5"/>
    <property type="match status" value="1"/>
</dbReference>
<dbReference type="PANTHER" id="PTHR11373:SF43">
    <property type="entry name" value="DEOXYGUANOSINETRIPHOSPHATE TRIPHOSPHOHYDROLASE-LIKE PROTEIN"/>
    <property type="match status" value="1"/>
</dbReference>
<dbReference type="PANTHER" id="PTHR11373">
    <property type="entry name" value="DEOXYNUCLEOSIDE TRIPHOSPHATE TRIPHOSPHOHYDROLASE"/>
    <property type="match status" value="1"/>
</dbReference>
<dbReference type="Pfam" id="PF01966">
    <property type="entry name" value="HD"/>
    <property type="match status" value="1"/>
</dbReference>
<dbReference type="Pfam" id="PF13286">
    <property type="entry name" value="HD_assoc"/>
    <property type="match status" value="1"/>
</dbReference>
<dbReference type="SMART" id="SM00471">
    <property type="entry name" value="HDc"/>
    <property type="match status" value="1"/>
</dbReference>
<dbReference type="SUPFAM" id="SSF109604">
    <property type="entry name" value="HD-domain/PDEase-like"/>
    <property type="match status" value="1"/>
</dbReference>
<dbReference type="PROSITE" id="PS51831">
    <property type="entry name" value="HD"/>
    <property type="match status" value="1"/>
</dbReference>
<organism>
    <name type="scientific">Rickettsia canadensis (strain McKiel)</name>
    <dbReference type="NCBI Taxonomy" id="293613"/>
    <lineage>
        <taxon>Bacteria</taxon>
        <taxon>Pseudomonadati</taxon>
        <taxon>Pseudomonadota</taxon>
        <taxon>Alphaproteobacteria</taxon>
        <taxon>Rickettsiales</taxon>
        <taxon>Rickettsiaceae</taxon>
        <taxon>Rickettsieae</taxon>
        <taxon>Rickettsia</taxon>
        <taxon>belli group</taxon>
    </lineage>
</organism>